<dbReference type="EC" id="4.3.2.1" evidence="1"/>
<dbReference type="EMBL" id="CP000671">
    <property type="protein sequence ID" value="ABQ98914.1"/>
    <property type="molecule type" value="Genomic_DNA"/>
</dbReference>
<dbReference type="SMR" id="A5UDR3"/>
<dbReference type="KEGG" id="hip:CGSHiEE_08005"/>
<dbReference type="HOGENOM" id="CLU_027272_2_3_6"/>
<dbReference type="UniPathway" id="UPA00068">
    <property type="reaction ID" value="UER00114"/>
</dbReference>
<dbReference type="GO" id="GO:0005829">
    <property type="term" value="C:cytosol"/>
    <property type="evidence" value="ECO:0007669"/>
    <property type="project" value="TreeGrafter"/>
</dbReference>
<dbReference type="GO" id="GO:0004056">
    <property type="term" value="F:argininosuccinate lyase activity"/>
    <property type="evidence" value="ECO:0007669"/>
    <property type="project" value="UniProtKB-UniRule"/>
</dbReference>
<dbReference type="GO" id="GO:0042450">
    <property type="term" value="P:arginine biosynthetic process via ornithine"/>
    <property type="evidence" value="ECO:0007669"/>
    <property type="project" value="InterPro"/>
</dbReference>
<dbReference type="GO" id="GO:0006526">
    <property type="term" value="P:L-arginine biosynthetic process"/>
    <property type="evidence" value="ECO:0007669"/>
    <property type="project" value="UniProtKB-UniRule"/>
</dbReference>
<dbReference type="CDD" id="cd01359">
    <property type="entry name" value="Argininosuccinate_lyase"/>
    <property type="match status" value="1"/>
</dbReference>
<dbReference type="FunFam" id="1.10.40.30:FF:000001">
    <property type="entry name" value="Argininosuccinate lyase"/>
    <property type="match status" value="1"/>
</dbReference>
<dbReference type="FunFam" id="1.20.200.10:FF:000006">
    <property type="entry name" value="Argininosuccinate lyase"/>
    <property type="match status" value="1"/>
</dbReference>
<dbReference type="Gene3D" id="1.10.40.30">
    <property type="entry name" value="Fumarase/aspartase (C-terminal domain)"/>
    <property type="match status" value="1"/>
</dbReference>
<dbReference type="Gene3D" id="1.20.200.10">
    <property type="entry name" value="Fumarase/aspartase (Central domain)"/>
    <property type="match status" value="1"/>
</dbReference>
<dbReference type="Gene3D" id="1.10.275.10">
    <property type="entry name" value="Fumarase/aspartase (N-terminal domain)"/>
    <property type="match status" value="1"/>
</dbReference>
<dbReference type="HAMAP" id="MF_00006">
    <property type="entry name" value="Arg_succ_lyase"/>
    <property type="match status" value="1"/>
</dbReference>
<dbReference type="InterPro" id="IPR029419">
    <property type="entry name" value="Arg_succ_lyase_C"/>
</dbReference>
<dbReference type="InterPro" id="IPR009049">
    <property type="entry name" value="Argininosuccinate_lyase"/>
</dbReference>
<dbReference type="InterPro" id="IPR024083">
    <property type="entry name" value="Fumarase/histidase_N"/>
</dbReference>
<dbReference type="InterPro" id="IPR020557">
    <property type="entry name" value="Fumarate_lyase_CS"/>
</dbReference>
<dbReference type="InterPro" id="IPR000362">
    <property type="entry name" value="Fumarate_lyase_fam"/>
</dbReference>
<dbReference type="InterPro" id="IPR022761">
    <property type="entry name" value="Fumarate_lyase_N"/>
</dbReference>
<dbReference type="InterPro" id="IPR008948">
    <property type="entry name" value="L-Aspartase-like"/>
</dbReference>
<dbReference type="NCBIfam" id="TIGR00838">
    <property type="entry name" value="argH"/>
    <property type="match status" value="1"/>
</dbReference>
<dbReference type="NCBIfam" id="NF008964">
    <property type="entry name" value="PRK12308.1"/>
    <property type="match status" value="1"/>
</dbReference>
<dbReference type="PANTHER" id="PTHR43814">
    <property type="entry name" value="ARGININOSUCCINATE LYASE"/>
    <property type="match status" value="1"/>
</dbReference>
<dbReference type="PANTHER" id="PTHR43814:SF1">
    <property type="entry name" value="ARGININOSUCCINATE LYASE"/>
    <property type="match status" value="1"/>
</dbReference>
<dbReference type="Pfam" id="PF14698">
    <property type="entry name" value="ASL_C2"/>
    <property type="match status" value="1"/>
</dbReference>
<dbReference type="Pfam" id="PF00206">
    <property type="entry name" value="Lyase_1"/>
    <property type="match status" value="1"/>
</dbReference>
<dbReference type="PRINTS" id="PR00145">
    <property type="entry name" value="ARGSUCLYASE"/>
</dbReference>
<dbReference type="PRINTS" id="PR00149">
    <property type="entry name" value="FUMRATELYASE"/>
</dbReference>
<dbReference type="SUPFAM" id="SSF48557">
    <property type="entry name" value="L-aspartase-like"/>
    <property type="match status" value="1"/>
</dbReference>
<dbReference type="PROSITE" id="PS00163">
    <property type="entry name" value="FUMARATE_LYASES"/>
    <property type="match status" value="1"/>
</dbReference>
<protein>
    <recommendedName>
        <fullName evidence="1">Argininosuccinate lyase</fullName>
        <shortName evidence="1">ASAL</shortName>
        <ecNumber evidence="1">4.3.2.1</ecNumber>
    </recommendedName>
    <alternativeName>
        <fullName evidence="1">Arginosuccinase</fullName>
    </alternativeName>
</protein>
<gene>
    <name evidence="1" type="primary">argH</name>
    <name type="ordered locus">CGSHiEE_08005</name>
</gene>
<proteinExistence type="inferred from homology"/>
<organism>
    <name type="scientific">Haemophilus influenzae (strain PittEE)</name>
    <dbReference type="NCBI Taxonomy" id="374930"/>
    <lineage>
        <taxon>Bacteria</taxon>
        <taxon>Pseudomonadati</taxon>
        <taxon>Pseudomonadota</taxon>
        <taxon>Gammaproteobacteria</taxon>
        <taxon>Pasteurellales</taxon>
        <taxon>Pasteurellaceae</taxon>
        <taxon>Haemophilus</taxon>
    </lineage>
</organism>
<reference key="1">
    <citation type="journal article" date="2007" name="Genome Biol.">
        <title>Characterization and modeling of the Haemophilus influenzae core and supragenomes based on the complete genomic sequences of Rd and 12 clinical nontypeable strains.</title>
        <authorList>
            <person name="Hogg J.S."/>
            <person name="Hu F.Z."/>
            <person name="Janto B."/>
            <person name="Boissy R."/>
            <person name="Hayes J."/>
            <person name="Keefe R."/>
            <person name="Post J.C."/>
            <person name="Ehrlich G.D."/>
        </authorList>
    </citation>
    <scope>NUCLEOTIDE SEQUENCE [LARGE SCALE GENOMIC DNA]</scope>
    <source>
        <strain>PittEE</strain>
    </source>
</reference>
<sequence>MALWGGRFTQAADKRFKDFNDSLRFDYRLAEQDIQGSIGWSKALVKVNVLTIEEQHQLEQALNELLVEVRSNPQAILQDDAEDIHSWVESKLIDKVGNLGKKLHTGRSRNDQVAVDIKLWCKQRVVELQESVRNLQRHLVQTAENTQQAVMPGYTHLQRAQPITFAHWCMAYVEMFDRDYSRLTDAYNRMNTCPLGSGALAGTAYAVDRDSLAHDLGFAFATRNSLDSVSDRDHIVELLSIASLSMAHLSRFAEDMIIFNSGEANFVELSDRVTSGSSLMPQKKNPDACELIRGKTGRVIGSLTSMLITLKGLPLAYNKDMQEDKEGIFDALDTWQNCVDMATFVLDELKVNVERTREAALKGYSNATELADYLVSKGVPFRDSHHIVGETVVYAIEKGKGLEDLTIPEFRQFSEVVGDDVYEILSLQSCLDKRCAKGGVSPLRVAEAIAEAKTRFA</sequence>
<keyword id="KW-0028">Amino-acid biosynthesis</keyword>
<keyword id="KW-0055">Arginine biosynthesis</keyword>
<keyword id="KW-0963">Cytoplasm</keyword>
<keyword id="KW-0456">Lyase</keyword>
<evidence type="ECO:0000255" key="1">
    <source>
        <dbReference type="HAMAP-Rule" id="MF_00006"/>
    </source>
</evidence>
<comment type="catalytic activity">
    <reaction evidence="1">
        <text>2-(N(omega)-L-arginino)succinate = fumarate + L-arginine</text>
        <dbReference type="Rhea" id="RHEA:24020"/>
        <dbReference type="ChEBI" id="CHEBI:29806"/>
        <dbReference type="ChEBI" id="CHEBI:32682"/>
        <dbReference type="ChEBI" id="CHEBI:57472"/>
        <dbReference type="EC" id="4.3.2.1"/>
    </reaction>
</comment>
<comment type="pathway">
    <text evidence="1">Amino-acid biosynthesis; L-arginine biosynthesis; L-arginine from L-ornithine and carbamoyl phosphate: step 3/3.</text>
</comment>
<comment type="subcellular location">
    <subcellularLocation>
        <location evidence="1">Cytoplasm</location>
    </subcellularLocation>
</comment>
<comment type="similarity">
    <text evidence="1">Belongs to the lyase 1 family. Argininosuccinate lyase subfamily.</text>
</comment>
<name>ARLY_HAEIE</name>
<feature type="chain" id="PRO_1000000482" description="Argininosuccinate lyase">
    <location>
        <begin position="1"/>
        <end position="457"/>
    </location>
</feature>
<accession>A5UDR3</accession>